<reference key="1">
    <citation type="journal article" date="2004" name="Proc. Natl. Acad. Sci. U.S.A.">
        <title>Complete genomes of two clinical Staphylococcus aureus strains: evidence for the rapid evolution of virulence and drug resistance.</title>
        <authorList>
            <person name="Holden M.T.G."/>
            <person name="Feil E.J."/>
            <person name="Lindsay J.A."/>
            <person name="Peacock S.J."/>
            <person name="Day N.P.J."/>
            <person name="Enright M.C."/>
            <person name="Foster T.J."/>
            <person name="Moore C.E."/>
            <person name="Hurst L."/>
            <person name="Atkin R."/>
            <person name="Barron A."/>
            <person name="Bason N."/>
            <person name="Bentley S.D."/>
            <person name="Chillingworth C."/>
            <person name="Chillingworth T."/>
            <person name="Churcher C."/>
            <person name="Clark L."/>
            <person name="Corton C."/>
            <person name="Cronin A."/>
            <person name="Doggett J."/>
            <person name="Dowd L."/>
            <person name="Feltwell T."/>
            <person name="Hance Z."/>
            <person name="Harris B."/>
            <person name="Hauser H."/>
            <person name="Holroyd S."/>
            <person name="Jagels K."/>
            <person name="James K.D."/>
            <person name="Lennard N."/>
            <person name="Line A."/>
            <person name="Mayes R."/>
            <person name="Moule S."/>
            <person name="Mungall K."/>
            <person name="Ormond D."/>
            <person name="Quail M.A."/>
            <person name="Rabbinowitsch E."/>
            <person name="Rutherford K.M."/>
            <person name="Sanders M."/>
            <person name="Sharp S."/>
            <person name="Simmonds M."/>
            <person name="Stevens K."/>
            <person name="Whitehead S."/>
            <person name="Barrell B.G."/>
            <person name="Spratt B.G."/>
            <person name="Parkhill J."/>
        </authorList>
    </citation>
    <scope>NUCLEOTIDE SEQUENCE [LARGE SCALE GENOMIC DNA]</scope>
    <source>
        <strain>MRSA252</strain>
    </source>
</reference>
<proteinExistence type="inferred from homology"/>
<sequence>MIEIEKPRIETIEISEDAKFGKFVVEPLERGYGTTLGNSLRRILLSSLPGAAVKYIEIEGVLHEFSAVDNVVEDVSTIIMNIKQLALKIYSEEDKTLEIDVRDEGEVTASDITHDSDVEILNPELKIATVSKGGHLKIRLVANKGRGYALAEQNNTSDLPIGVIPVDSLYSPVERVNYTVENTRVGQSSDFDKLTLDVWTNGSITPQESVSLAAKIMTEHLNIFVGLTDEAQNAEIMIEKEEDQKEKVLEMSIEELDLSVRSYNCLKRAGINSVQELADKSEADMMKVRNLGRKSLEEVKYKLEDLGLGLRKED</sequence>
<feature type="chain" id="PRO_0000175382" description="DNA-directed RNA polymerase subunit alpha">
    <location>
        <begin position="1"/>
        <end position="314"/>
    </location>
</feature>
<feature type="region of interest" description="Alpha N-terminal domain (alpha-NTD)" evidence="1">
    <location>
        <begin position="1"/>
        <end position="228"/>
    </location>
</feature>
<feature type="region of interest" description="Alpha C-terminal domain (alpha-CTD)" evidence="1">
    <location>
        <begin position="245"/>
        <end position="314"/>
    </location>
</feature>
<name>RPOA_STAAR</name>
<organism>
    <name type="scientific">Staphylococcus aureus (strain MRSA252)</name>
    <dbReference type="NCBI Taxonomy" id="282458"/>
    <lineage>
        <taxon>Bacteria</taxon>
        <taxon>Bacillati</taxon>
        <taxon>Bacillota</taxon>
        <taxon>Bacilli</taxon>
        <taxon>Bacillales</taxon>
        <taxon>Staphylococcaceae</taxon>
        <taxon>Staphylococcus</taxon>
    </lineage>
</organism>
<evidence type="ECO:0000255" key="1">
    <source>
        <dbReference type="HAMAP-Rule" id="MF_00059"/>
    </source>
</evidence>
<keyword id="KW-0240">DNA-directed RNA polymerase</keyword>
<keyword id="KW-0548">Nucleotidyltransferase</keyword>
<keyword id="KW-0804">Transcription</keyword>
<keyword id="KW-0808">Transferase</keyword>
<gene>
    <name evidence="1" type="primary">rpoA</name>
    <name type="ordered locus">SAR2309</name>
</gene>
<protein>
    <recommendedName>
        <fullName evidence="1">DNA-directed RNA polymerase subunit alpha</fullName>
        <shortName evidence="1">RNAP subunit alpha</shortName>
        <ecNumber evidence="1">2.7.7.6</ecNumber>
    </recommendedName>
    <alternativeName>
        <fullName evidence="1">RNA polymerase subunit alpha</fullName>
    </alternativeName>
    <alternativeName>
        <fullName evidence="1">Transcriptase subunit alpha</fullName>
    </alternativeName>
</protein>
<accession>Q6GEK9</accession>
<comment type="function">
    <text evidence="1">DNA-dependent RNA polymerase catalyzes the transcription of DNA into RNA using the four ribonucleoside triphosphates as substrates.</text>
</comment>
<comment type="catalytic activity">
    <reaction evidence="1">
        <text>RNA(n) + a ribonucleoside 5'-triphosphate = RNA(n+1) + diphosphate</text>
        <dbReference type="Rhea" id="RHEA:21248"/>
        <dbReference type="Rhea" id="RHEA-COMP:14527"/>
        <dbReference type="Rhea" id="RHEA-COMP:17342"/>
        <dbReference type="ChEBI" id="CHEBI:33019"/>
        <dbReference type="ChEBI" id="CHEBI:61557"/>
        <dbReference type="ChEBI" id="CHEBI:140395"/>
        <dbReference type="EC" id="2.7.7.6"/>
    </reaction>
</comment>
<comment type="subunit">
    <text evidence="1">Homodimer. The RNAP catalytic core consists of 2 alpha, 1 beta, 1 beta' and 1 omega subunit. When a sigma factor is associated with the core the holoenzyme is formed, which can initiate transcription.</text>
</comment>
<comment type="domain">
    <text evidence="1">The N-terminal domain is essential for RNAP assembly and basal transcription, whereas the C-terminal domain is involved in interaction with transcriptional regulators and with upstream promoter elements.</text>
</comment>
<comment type="similarity">
    <text evidence="1">Belongs to the RNA polymerase alpha chain family.</text>
</comment>
<dbReference type="EC" id="2.7.7.6" evidence="1"/>
<dbReference type="EMBL" id="BX571856">
    <property type="protein sequence ID" value="CAG41290.1"/>
    <property type="molecule type" value="Genomic_DNA"/>
</dbReference>
<dbReference type="RefSeq" id="WP_000569649.1">
    <property type="nucleotide sequence ID" value="NC_002952.2"/>
</dbReference>
<dbReference type="SMR" id="Q6GEK9"/>
<dbReference type="KEGG" id="sar:SAR2309"/>
<dbReference type="HOGENOM" id="CLU_053084_0_1_9"/>
<dbReference type="Proteomes" id="UP000000596">
    <property type="component" value="Chromosome"/>
</dbReference>
<dbReference type="GO" id="GO:0005737">
    <property type="term" value="C:cytoplasm"/>
    <property type="evidence" value="ECO:0007669"/>
    <property type="project" value="UniProtKB-ARBA"/>
</dbReference>
<dbReference type="GO" id="GO:0000428">
    <property type="term" value="C:DNA-directed RNA polymerase complex"/>
    <property type="evidence" value="ECO:0007669"/>
    <property type="project" value="UniProtKB-KW"/>
</dbReference>
<dbReference type="GO" id="GO:0003677">
    <property type="term" value="F:DNA binding"/>
    <property type="evidence" value="ECO:0007669"/>
    <property type="project" value="UniProtKB-UniRule"/>
</dbReference>
<dbReference type="GO" id="GO:0003899">
    <property type="term" value="F:DNA-directed RNA polymerase activity"/>
    <property type="evidence" value="ECO:0007669"/>
    <property type="project" value="UniProtKB-UniRule"/>
</dbReference>
<dbReference type="GO" id="GO:0046983">
    <property type="term" value="F:protein dimerization activity"/>
    <property type="evidence" value="ECO:0007669"/>
    <property type="project" value="InterPro"/>
</dbReference>
<dbReference type="GO" id="GO:0006351">
    <property type="term" value="P:DNA-templated transcription"/>
    <property type="evidence" value="ECO:0007669"/>
    <property type="project" value="UniProtKB-UniRule"/>
</dbReference>
<dbReference type="CDD" id="cd06928">
    <property type="entry name" value="RNAP_alpha_NTD"/>
    <property type="match status" value="1"/>
</dbReference>
<dbReference type="FunFam" id="1.10.150.20:FF:000001">
    <property type="entry name" value="DNA-directed RNA polymerase subunit alpha"/>
    <property type="match status" value="1"/>
</dbReference>
<dbReference type="FunFam" id="2.170.120.12:FF:000001">
    <property type="entry name" value="DNA-directed RNA polymerase subunit alpha"/>
    <property type="match status" value="1"/>
</dbReference>
<dbReference type="Gene3D" id="1.10.150.20">
    <property type="entry name" value="5' to 3' exonuclease, C-terminal subdomain"/>
    <property type="match status" value="1"/>
</dbReference>
<dbReference type="Gene3D" id="2.170.120.12">
    <property type="entry name" value="DNA-directed RNA polymerase, insert domain"/>
    <property type="match status" value="1"/>
</dbReference>
<dbReference type="Gene3D" id="3.30.1360.10">
    <property type="entry name" value="RNA polymerase, RBP11-like subunit"/>
    <property type="match status" value="1"/>
</dbReference>
<dbReference type="HAMAP" id="MF_00059">
    <property type="entry name" value="RNApol_bact_RpoA"/>
    <property type="match status" value="1"/>
</dbReference>
<dbReference type="InterPro" id="IPR011262">
    <property type="entry name" value="DNA-dir_RNA_pol_insert"/>
</dbReference>
<dbReference type="InterPro" id="IPR011263">
    <property type="entry name" value="DNA-dir_RNA_pol_RpoA/D/Rpb3"/>
</dbReference>
<dbReference type="InterPro" id="IPR011773">
    <property type="entry name" value="DNA-dir_RpoA"/>
</dbReference>
<dbReference type="InterPro" id="IPR036603">
    <property type="entry name" value="RBP11-like"/>
</dbReference>
<dbReference type="InterPro" id="IPR011260">
    <property type="entry name" value="RNAP_asu_C"/>
</dbReference>
<dbReference type="InterPro" id="IPR036643">
    <property type="entry name" value="RNApol_insert_sf"/>
</dbReference>
<dbReference type="NCBIfam" id="NF003513">
    <property type="entry name" value="PRK05182.1-2"/>
    <property type="match status" value="1"/>
</dbReference>
<dbReference type="NCBIfam" id="NF003515">
    <property type="entry name" value="PRK05182.2-1"/>
    <property type="match status" value="1"/>
</dbReference>
<dbReference type="NCBIfam" id="NF003519">
    <property type="entry name" value="PRK05182.2-5"/>
    <property type="match status" value="1"/>
</dbReference>
<dbReference type="NCBIfam" id="TIGR02027">
    <property type="entry name" value="rpoA"/>
    <property type="match status" value="1"/>
</dbReference>
<dbReference type="Pfam" id="PF01000">
    <property type="entry name" value="RNA_pol_A_bac"/>
    <property type="match status" value="1"/>
</dbReference>
<dbReference type="Pfam" id="PF03118">
    <property type="entry name" value="RNA_pol_A_CTD"/>
    <property type="match status" value="1"/>
</dbReference>
<dbReference type="Pfam" id="PF01193">
    <property type="entry name" value="RNA_pol_L"/>
    <property type="match status" value="1"/>
</dbReference>
<dbReference type="SMART" id="SM00662">
    <property type="entry name" value="RPOLD"/>
    <property type="match status" value="1"/>
</dbReference>
<dbReference type="SUPFAM" id="SSF47789">
    <property type="entry name" value="C-terminal domain of RNA polymerase alpha subunit"/>
    <property type="match status" value="1"/>
</dbReference>
<dbReference type="SUPFAM" id="SSF56553">
    <property type="entry name" value="Insert subdomain of RNA polymerase alpha subunit"/>
    <property type="match status" value="1"/>
</dbReference>
<dbReference type="SUPFAM" id="SSF55257">
    <property type="entry name" value="RBP11-like subunits of RNA polymerase"/>
    <property type="match status" value="1"/>
</dbReference>